<gene>
    <name evidence="1" type="primary">rpsM</name>
    <name type="ordered locus">Gura_1089</name>
</gene>
<name>RS13_GEOUR</name>
<feature type="chain" id="PRO_1000086241" description="Small ribosomal subunit protein uS13">
    <location>
        <begin position="1"/>
        <end position="122"/>
    </location>
</feature>
<feature type="region of interest" description="Disordered" evidence="2">
    <location>
        <begin position="95"/>
        <end position="122"/>
    </location>
</feature>
<evidence type="ECO:0000255" key="1">
    <source>
        <dbReference type="HAMAP-Rule" id="MF_01315"/>
    </source>
</evidence>
<evidence type="ECO:0000256" key="2">
    <source>
        <dbReference type="SAM" id="MobiDB-lite"/>
    </source>
</evidence>
<evidence type="ECO:0000305" key="3"/>
<proteinExistence type="inferred from homology"/>
<keyword id="KW-1185">Reference proteome</keyword>
<keyword id="KW-0687">Ribonucleoprotein</keyword>
<keyword id="KW-0689">Ribosomal protein</keyword>
<keyword id="KW-0694">RNA-binding</keyword>
<keyword id="KW-0699">rRNA-binding</keyword>
<keyword id="KW-0820">tRNA-binding</keyword>
<organism>
    <name type="scientific">Geotalea uraniireducens (strain Rf4)</name>
    <name type="common">Geobacter uraniireducens</name>
    <dbReference type="NCBI Taxonomy" id="351605"/>
    <lineage>
        <taxon>Bacteria</taxon>
        <taxon>Pseudomonadati</taxon>
        <taxon>Thermodesulfobacteriota</taxon>
        <taxon>Desulfuromonadia</taxon>
        <taxon>Geobacterales</taxon>
        <taxon>Geobacteraceae</taxon>
        <taxon>Geotalea</taxon>
    </lineage>
</organism>
<dbReference type="EMBL" id="CP000698">
    <property type="protein sequence ID" value="ABQ25295.1"/>
    <property type="molecule type" value="Genomic_DNA"/>
</dbReference>
<dbReference type="RefSeq" id="WP_011938017.1">
    <property type="nucleotide sequence ID" value="NC_009483.1"/>
</dbReference>
<dbReference type="SMR" id="A5GAU3"/>
<dbReference type="STRING" id="351605.Gura_1089"/>
<dbReference type="KEGG" id="gur:Gura_1089"/>
<dbReference type="HOGENOM" id="CLU_103849_1_2_7"/>
<dbReference type="OrthoDB" id="9803610at2"/>
<dbReference type="Proteomes" id="UP000006695">
    <property type="component" value="Chromosome"/>
</dbReference>
<dbReference type="GO" id="GO:0005829">
    <property type="term" value="C:cytosol"/>
    <property type="evidence" value="ECO:0007669"/>
    <property type="project" value="TreeGrafter"/>
</dbReference>
<dbReference type="GO" id="GO:0015935">
    <property type="term" value="C:small ribosomal subunit"/>
    <property type="evidence" value="ECO:0007669"/>
    <property type="project" value="TreeGrafter"/>
</dbReference>
<dbReference type="GO" id="GO:0019843">
    <property type="term" value="F:rRNA binding"/>
    <property type="evidence" value="ECO:0007669"/>
    <property type="project" value="UniProtKB-UniRule"/>
</dbReference>
<dbReference type="GO" id="GO:0003735">
    <property type="term" value="F:structural constituent of ribosome"/>
    <property type="evidence" value="ECO:0007669"/>
    <property type="project" value="InterPro"/>
</dbReference>
<dbReference type="GO" id="GO:0000049">
    <property type="term" value="F:tRNA binding"/>
    <property type="evidence" value="ECO:0007669"/>
    <property type="project" value="UniProtKB-UniRule"/>
</dbReference>
<dbReference type="GO" id="GO:0006412">
    <property type="term" value="P:translation"/>
    <property type="evidence" value="ECO:0007669"/>
    <property type="project" value="UniProtKB-UniRule"/>
</dbReference>
<dbReference type="FunFam" id="1.10.8.50:FF:000001">
    <property type="entry name" value="30S ribosomal protein S13"/>
    <property type="match status" value="1"/>
</dbReference>
<dbReference type="FunFam" id="4.10.910.10:FF:000001">
    <property type="entry name" value="30S ribosomal protein S13"/>
    <property type="match status" value="1"/>
</dbReference>
<dbReference type="Gene3D" id="1.10.8.50">
    <property type="match status" value="1"/>
</dbReference>
<dbReference type="Gene3D" id="4.10.910.10">
    <property type="entry name" value="30s ribosomal protein s13, domain 2"/>
    <property type="match status" value="1"/>
</dbReference>
<dbReference type="HAMAP" id="MF_01315">
    <property type="entry name" value="Ribosomal_uS13"/>
    <property type="match status" value="1"/>
</dbReference>
<dbReference type="InterPro" id="IPR027437">
    <property type="entry name" value="Rbsml_uS13_C"/>
</dbReference>
<dbReference type="InterPro" id="IPR001892">
    <property type="entry name" value="Ribosomal_uS13"/>
</dbReference>
<dbReference type="InterPro" id="IPR010979">
    <property type="entry name" value="Ribosomal_uS13-like_H2TH"/>
</dbReference>
<dbReference type="InterPro" id="IPR019980">
    <property type="entry name" value="Ribosomal_uS13_bac-type"/>
</dbReference>
<dbReference type="InterPro" id="IPR018269">
    <property type="entry name" value="Ribosomal_uS13_CS"/>
</dbReference>
<dbReference type="NCBIfam" id="TIGR03631">
    <property type="entry name" value="uS13_bact"/>
    <property type="match status" value="1"/>
</dbReference>
<dbReference type="PANTHER" id="PTHR10871">
    <property type="entry name" value="30S RIBOSOMAL PROTEIN S13/40S RIBOSOMAL PROTEIN S18"/>
    <property type="match status" value="1"/>
</dbReference>
<dbReference type="PANTHER" id="PTHR10871:SF1">
    <property type="entry name" value="SMALL RIBOSOMAL SUBUNIT PROTEIN US13M"/>
    <property type="match status" value="1"/>
</dbReference>
<dbReference type="Pfam" id="PF00416">
    <property type="entry name" value="Ribosomal_S13"/>
    <property type="match status" value="1"/>
</dbReference>
<dbReference type="PIRSF" id="PIRSF002134">
    <property type="entry name" value="Ribosomal_S13"/>
    <property type="match status" value="1"/>
</dbReference>
<dbReference type="SUPFAM" id="SSF46946">
    <property type="entry name" value="S13-like H2TH domain"/>
    <property type="match status" value="1"/>
</dbReference>
<dbReference type="PROSITE" id="PS00646">
    <property type="entry name" value="RIBOSOMAL_S13_1"/>
    <property type="match status" value="1"/>
</dbReference>
<dbReference type="PROSITE" id="PS50159">
    <property type="entry name" value="RIBOSOMAL_S13_2"/>
    <property type="match status" value="1"/>
</dbReference>
<accession>A5GAU3</accession>
<comment type="function">
    <text evidence="1">Located at the top of the head of the 30S subunit, it contacts several helices of the 16S rRNA. In the 70S ribosome it contacts the 23S rRNA (bridge B1a) and protein L5 of the 50S subunit (bridge B1b), connecting the 2 subunits; these bridges are implicated in subunit movement. Contacts the tRNAs in the A and P-sites.</text>
</comment>
<comment type="subunit">
    <text evidence="1">Part of the 30S ribosomal subunit. Forms a loose heterodimer with protein S19. Forms two bridges to the 50S subunit in the 70S ribosome.</text>
</comment>
<comment type="similarity">
    <text evidence="1">Belongs to the universal ribosomal protein uS13 family.</text>
</comment>
<reference key="1">
    <citation type="submission" date="2007-05" db="EMBL/GenBank/DDBJ databases">
        <title>Complete sequence of Geobacter uraniireducens Rf4.</title>
        <authorList>
            <consortium name="US DOE Joint Genome Institute"/>
            <person name="Copeland A."/>
            <person name="Lucas S."/>
            <person name="Lapidus A."/>
            <person name="Barry K."/>
            <person name="Detter J.C."/>
            <person name="Glavina del Rio T."/>
            <person name="Hammon N."/>
            <person name="Israni S."/>
            <person name="Dalin E."/>
            <person name="Tice H."/>
            <person name="Pitluck S."/>
            <person name="Chertkov O."/>
            <person name="Brettin T."/>
            <person name="Bruce D."/>
            <person name="Han C."/>
            <person name="Schmutz J."/>
            <person name="Larimer F."/>
            <person name="Land M."/>
            <person name="Hauser L."/>
            <person name="Kyrpides N."/>
            <person name="Mikhailova N."/>
            <person name="Shelobolina E."/>
            <person name="Aklujkar M."/>
            <person name="Lovley D."/>
            <person name="Richardson P."/>
        </authorList>
    </citation>
    <scope>NUCLEOTIDE SEQUENCE [LARGE SCALE GENOMIC DNA]</scope>
    <source>
        <strain>ATCC BAA-1134 / JCM 13001 / Rf4</strain>
    </source>
</reference>
<protein>
    <recommendedName>
        <fullName evidence="1">Small ribosomal subunit protein uS13</fullName>
    </recommendedName>
    <alternativeName>
        <fullName evidence="3">30S ribosomal protein S13</fullName>
    </alternativeName>
</protein>
<sequence length="122" mass="13711">MARIAGIDLPRNKRIEIALTYIYGIGRSTAQKILADAGVDSNTRSDNLTESEIARIRENIDKNVKVEGDLRRDISMNIKRLMDLGCYRGLRHRKGLPVHGQRTKTNARTRKGPARTVAGKKK</sequence>